<protein>
    <recommendedName>
        <fullName evidence="4">Secreted RxLR effector protein 76</fullName>
    </recommendedName>
</protein>
<accession>P0CV24</accession>
<name>RLR76_PLAVT</name>
<sequence length="306" mass="34261">MSGAFYVFTALLLVASDQIAAESGKRLEMYKHDVMAASNAVVKSLPNRFLRGSRDEPDNLANEERTVYSVLASMINEGVSKMPCAAEVVEKISHTTEAVENMPRAAKAVKKRPRGAKAGRKMPRAAEAEAVKKVPRAGTAVKKAPPLAEDVKEMPRAKEAMEELRRAADATEDMQRAKANDLLKALIGADEALKKHWTPSGNTAAIGDTSYDVFNKVILSLPEWKINFRGMKSMAVLDQHRENIDLVHKTFEILCDKNVKPTAAEVSFIWSMMEWKGPNPEKYHRRNLVRQAQRYVFLDLRNVKKR</sequence>
<proteinExistence type="evidence at transcript level"/>
<keyword id="KW-1048">Host nucleus</keyword>
<keyword id="KW-0964">Secreted</keyword>
<keyword id="KW-0732">Signal</keyword>
<keyword id="KW-0843">Virulence</keyword>
<gene>
    <name evidence="4" type="primary">RXLR76</name>
</gene>
<organism>
    <name type="scientific">Plasmopara viticola</name>
    <name type="common">Downy mildew of grapevine</name>
    <name type="synonym">Botrytis viticola</name>
    <dbReference type="NCBI Taxonomy" id="143451"/>
    <lineage>
        <taxon>Eukaryota</taxon>
        <taxon>Sar</taxon>
        <taxon>Stramenopiles</taxon>
        <taxon>Oomycota</taxon>
        <taxon>Peronosporales</taxon>
        <taxon>Peronosporaceae</taxon>
        <taxon>Plasmopara</taxon>
    </lineage>
</organism>
<feature type="signal peptide" evidence="1">
    <location>
        <begin position="1"/>
        <end position="21"/>
    </location>
</feature>
<feature type="chain" id="PRO_0000447933" description="Secreted RxLR effector protein 76">
    <location>
        <begin position="22"/>
        <end position="306"/>
    </location>
</feature>
<feature type="region of interest" description="Disordered" evidence="2">
    <location>
        <begin position="105"/>
        <end position="142"/>
    </location>
</feature>
<feature type="short sequence motif" description="RxLR-dEER" evidence="6">
    <location>
        <begin position="48"/>
        <end position="65"/>
    </location>
</feature>
<feature type="compositionally biased region" description="Basic residues" evidence="2">
    <location>
        <begin position="107"/>
        <end position="123"/>
    </location>
</feature>
<comment type="function">
    <text evidence="3">Secreted effector that partially suppresses the host cell death induced by cell death-inducing proteins.</text>
</comment>
<comment type="subcellular location">
    <subcellularLocation>
        <location evidence="3">Secreted</location>
    </subcellularLocation>
    <subcellularLocation>
        <location evidence="3">Host nucleus</location>
    </subcellularLocation>
    <text evidence="3">Localizes to bulk/chunk-like structures within the nucleus.</text>
</comment>
<comment type="domain">
    <text evidence="6">The RxLR-dEER motif acts to carry the protein into the host cell cytoplasm through binding to cell surface phosphatidylinositol-3-phosphate.</text>
</comment>
<comment type="similarity">
    <text evidence="5">Belongs to the RxLR effector family.</text>
</comment>
<dbReference type="SMR" id="P0CV24"/>
<dbReference type="GO" id="GO:0005576">
    <property type="term" value="C:extracellular region"/>
    <property type="evidence" value="ECO:0007669"/>
    <property type="project" value="UniProtKB-SubCell"/>
</dbReference>
<dbReference type="GO" id="GO:0042025">
    <property type="term" value="C:host cell nucleus"/>
    <property type="evidence" value="ECO:0007669"/>
    <property type="project" value="UniProtKB-SubCell"/>
</dbReference>
<evidence type="ECO:0000255" key="1"/>
<evidence type="ECO:0000256" key="2">
    <source>
        <dbReference type="SAM" id="MobiDB-lite"/>
    </source>
</evidence>
<evidence type="ECO:0000269" key="3">
    <source>
    </source>
</evidence>
<evidence type="ECO:0000303" key="4">
    <source>
    </source>
</evidence>
<evidence type="ECO:0000305" key="5"/>
<evidence type="ECO:0000305" key="6">
    <source>
    </source>
</evidence>
<reference key="1">
    <citation type="journal article" date="2018" name="Front. Plant Sci.">
        <title>In planta functional analysis and subcellular localization of the oomycete pathogen Plasmopara viticola candidate RXLR effector repertoire.</title>
        <authorList>
            <person name="Liu Y."/>
            <person name="Lan X."/>
            <person name="Song S."/>
            <person name="Yin L."/>
            <person name="Dry I.B."/>
            <person name="Qu J."/>
            <person name="Xiang J."/>
            <person name="Lu J."/>
        </authorList>
    </citation>
    <scope>NUCLEOTIDE SEQUENCE [MRNA]</scope>
    <scope>DOMAIN</scope>
    <scope>FUNCTION</scope>
    <scope>SUBCELLULAR LOCATION</scope>
</reference>